<proteinExistence type="inferred from homology"/>
<dbReference type="EC" id="2.1.3.15" evidence="1"/>
<dbReference type="EMBL" id="CP000744">
    <property type="protein sequence ID" value="ABR85350.1"/>
    <property type="molecule type" value="Genomic_DNA"/>
</dbReference>
<dbReference type="RefSeq" id="WP_003109333.1">
    <property type="nucleotide sequence ID" value="NC_009656.1"/>
</dbReference>
<dbReference type="SMR" id="A6V1E9"/>
<dbReference type="GeneID" id="77219880"/>
<dbReference type="KEGG" id="pap:PSPA7_1500"/>
<dbReference type="HOGENOM" id="CLU_015486_0_2_6"/>
<dbReference type="UniPathway" id="UPA00655">
    <property type="reaction ID" value="UER00711"/>
</dbReference>
<dbReference type="Proteomes" id="UP000001582">
    <property type="component" value="Chromosome"/>
</dbReference>
<dbReference type="GO" id="GO:0009317">
    <property type="term" value="C:acetyl-CoA carboxylase complex"/>
    <property type="evidence" value="ECO:0007669"/>
    <property type="project" value="InterPro"/>
</dbReference>
<dbReference type="GO" id="GO:0003989">
    <property type="term" value="F:acetyl-CoA carboxylase activity"/>
    <property type="evidence" value="ECO:0007669"/>
    <property type="project" value="InterPro"/>
</dbReference>
<dbReference type="GO" id="GO:0005524">
    <property type="term" value="F:ATP binding"/>
    <property type="evidence" value="ECO:0007669"/>
    <property type="project" value="UniProtKB-KW"/>
</dbReference>
<dbReference type="GO" id="GO:0016743">
    <property type="term" value="F:carboxyl- or carbamoyltransferase activity"/>
    <property type="evidence" value="ECO:0007669"/>
    <property type="project" value="UniProtKB-UniRule"/>
</dbReference>
<dbReference type="GO" id="GO:0006633">
    <property type="term" value="P:fatty acid biosynthetic process"/>
    <property type="evidence" value="ECO:0007669"/>
    <property type="project" value="UniProtKB-KW"/>
</dbReference>
<dbReference type="GO" id="GO:2001295">
    <property type="term" value="P:malonyl-CoA biosynthetic process"/>
    <property type="evidence" value="ECO:0007669"/>
    <property type="project" value="UniProtKB-UniRule"/>
</dbReference>
<dbReference type="FunFam" id="3.90.226.10:FF:000008">
    <property type="entry name" value="Acetyl-coenzyme A carboxylase carboxyl transferase subunit alpha"/>
    <property type="match status" value="1"/>
</dbReference>
<dbReference type="Gene3D" id="3.90.226.10">
    <property type="entry name" value="2-enoyl-CoA Hydratase, Chain A, domain 1"/>
    <property type="match status" value="1"/>
</dbReference>
<dbReference type="HAMAP" id="MF_00823">
    <property type="entry name" value="AcetylCoA_CT_alpha"/>
    <property type="match status" value="1"/>
</dbReference>
<dbReference type="InterPro" id="IPR001095">
    <property type="entry name" value="Acetyl_CoA_COase_a_su"/>
</dbReference>
<dbReference type="InterPro" id="IPR029045">
    <property type="entry name" value="ClpP/crotonase-like_dom_sf"/>
</dbReference>
<dbReference type="InterPro" id="IPR011763">
    <property type="entry name" value="COA_CT_C"/>
</dbReference>
<dbReference type="NCBIfam" id="TIGR00513">
    <property type="entry name" value="accA"/>
    <property type="match status" value="1"/>
</dbReference>
<dbReference type="NCBIfam" id="NF041504">
    <property type="entry name" value="AccA_sub"/>
    <property type="match status" value="1"/>
</dbReference>
<dbReference type="NCBIfam" id="NF004344">
    <property type="entry name" value="PRK05724.1"/>
    <property type="match status" value="1"/>
</dbReference>
<dbReference type="PANTHER" id="PTHR42853">
    <property type="entry name" value="ACETYL-COENZYME A CARBOXYLASE CARBOXYL TRANSFERASE SUBUNIT ALPHA"/>
    <property type="match status" value="1"/>
</dbReference>
<dbReference type="PANTHER" id="PTHR42853:SF3">
    <property type="entry name" value="ACETYL-COENZYME A CARBOXYLASE CARBOXYL TRANSFERASE SUBUNIT ALPHA, CHLOROPLASTIC"/>
    <property type="match status" value="1"/>
</dbReference>
<dbReference type="Pfam" id="PF03255">
    <property type="entry name" value="ACCA"/>
    <property type="match status" value="1"/>
</dbReference>
<dbReference type="PRINTS" id="PR01069">
    <property type="entry name" value="ACCCTRFRASEA"/>
</dbReference>
<dbReference type="SUPFAM" id="SSF52096">
    <property type="entry name" value="ClpP/crotonase"/>
    <property type="match status" value="1"/>
</dbReference>
<dbReference type="PROSITE" id="PS50989">
    <property type="entry name" value="COA_CT_CTER"/>
    <property type="match status" value="1"/>
</dbReference>
<keyword id="KW-0067">ATP-binding</keyword>
<keyword id="KW-0963">Cytoplasm</keyword>
<keyword id="KW-0275">Fatty acid biosynthesis</keyword>
<keyword id="KW-0276">Fatty acid metabolism</keyword>
<keyword id="KW-0444">Lipid biosynthesis</keyword>
<keyword id="KW-0443">Lipid metabolism</keyword>
<keyword id="KW-0547">Nucleotide-binding</keyword>
<keyword id="KW-0808">Transferase</keyword>
<comment type="function">
    <text evidence="1">Component of the acetyl coenzyme A carboxylase (ACC) complex. First, biotin carboxylase catalyzes the carboxylation of biotin on its carrier protein (BCCP) and then the CO(2) group is transferred by the carboxyltransferase to acetyl-CoA to form malonyl-CoA.</text>
</comment>
<comment type="catalytic activity">
    <reaction evidence="1">
        <text>N(6)-carboxybiotinyl-L-lysyl-[protein] + acetyl-CoA = N(6)-biotinyl-L-lysyl-[protein] + malonyl-CoA</text>
        <dbReference type="Rhea" id="RHEA:54728"/>
        <dbReference type="Rhea" id="RHEA-COMP:10505"/>
        <dbReference type="Rhea" id="RHEA-COMP:10506"/>
        <dbReference type="ChEBI" id="CHEBI:57288"/>
        <dbReference type="ChEBI" id="CHEBI:57384"/>
        <dbReference type="ChEBI" id="CHEBI:83144"/>
        <dbReference type="ChEBI" id="CHEBI:83145"/>
        <dbReference type="EC" id="2.1.3.15"/>
    </reaction>
</comment>
<comment type="pathway">
    <text evidence="1">Lipid metabolism; malonyl-CoA biosynthesis; malonyl-CoA from acetyl-CoA: step 1/1.</text>
</comment>
<comment type="subunit">
    <text evidence="1">Acetyl-CoA carboxylase is a heterohexamer composed of biotin carboxyl carrier protein (AccB), biotin carboxylase (AccC) and two subunits each of ACCase subunit alpha (AccA) and ACCase subunit beta (AccD).</text>
</comment>
<comment type="subcellular location">
    <subcellularLocation>
        <location evidence="1">Cytoplasm</location>
    </subcellularLocation>
</comment>
<comment type="similarity">
    <text evidence="1">Belongs to the AccA family.</text>
</comment>
<name>ACCA_PSEP7</name>
<organism>
    <name type="scientific">Pseudomonas paraeruginosa (strain DSM 24068 / PA7)</name>
    <name type="common">Pseudomonas aeruginosa (strain PA7)</name>
    <dbReference type="NCBI Taxonomy" id="381754"/>
    <lineage>
        <taxon>Bacteria</taxon>
        <taxon>Pseudomonadati</taxon>
        <taxon>Pseudomonadota</taxon>
        <taxon>Gammaproteobacteria</taxon>
        <taxon>Pseudomonadales</taxon>
        <taxon>Pseudomonadaceae</taxon>
        <taxon>Pseudomonas</taxon>
        <taxon>Pseudomonas paraeruginosa</taxon>
    </lineage>
</organism>
<protein>
    <recommendedName>
        <fullName evidence="1">Acetyl-coenzyme A carboxylase carboxyl transferase subunit alpha</fullName>
        <shortName evidence="1">ACCase subunit alpha</shortName>
        <shortName evidence="1">Acetyl-CoA carboxylase carboxyltransferase subunit alpha</shortName>
        <ecNumber evidence="1">2.1.3.15</ecNumber>
    </recommendedName>
</protein>
<sequence length="316" mass="34947">MNPNFLDFEQPIADLQAKIEELRLVGNDNALNISDEISRLQDKSKALTENIFGNLSSWQIAQLARHPKRPYTLDYIGYLFSDFEELHGDRHFADDPAIVGGVARLDGSPVMVIGHQKGREVREKVRRNFGMPRPEGYRKACRLMEMAERFKMPILTFIDTPGAYPGIDAEERGQSEAIAWNLRVMARLKTPIIATVIGEGGSGGALAIGVCDQLNMLQYSTYSVISPEGCASILWKTAEKAPEAAEAMGITAERLKGLGIVDKVIDEPLGGAHRDPASMAESIRGELLAQLKMLQGLEMGELLERRYDRLMSYGAP</sequence>
<reference key="1">
    <citation type="submission" date="2007-06" db="EMBL/GenBank/DDBJ databases">
        <authorList>
            <person name="Dodson R.J."/>
            <person name="Harkins D."/>
            <person name="Paulsen I.T."/>
        </authorList>
    </citation>
    <scope>NUCLEOTIDE SEQUENCE [LARGE SCALE GENOMIC DNA]</scope>
    <source>
        <strain>DSM 24068 / PA7</strain>
    </source>
</reference>
<gene>
    <name evidence="1" type="primary">accA</name>
    <name type="ordered locus">PSPA7_1500</name>
</gene>
<evidence type="ECO:0000255" key="1">
    <source>
        <dbReference type="HAMAP-Rule" id="MF_00823"/>
    </source>
</evidence>
<evidence type="ECO:0000255" key="2">
    <source>
        <dbReference type="PROSITE-ProRule" id="PRU01137"/>
    </source>
</evidence>
<feature type="chain" id="PRO_1000062655" description="Acetyl-coenzyme A carboxylase carboxyl transferase subunit alpha">
    <location>
        <begin position="1"/>
        <end position="316"/>
    </location>
</feature>
<feature type="domain" description="CoA carboxyltransferase C-terminal" evidence="2">
    <location>
        <begin position="39"/>
        <end position="293"/>
    </location>
</feature>
<accession>A6V1E9</accession>